<proteinExistence type="evidence at protein level"/>
<keyword id="KW-0025">Alternative splicing</keyword>
<keyword id="KW-0378">Hydrolase</keyword>
<keyword id="KW-1185">Reference proteome</keyword>
<dbReference type="EC" id="3.1.1.-" evidence="2"/>
<dbReference type="EMBL" id="AC003040">
    <property type="protein sequence ID" value="AAC23771.1"/>
    <property type="molecule type" value="Genomic_DNA"/>
</dbReference>
<dbReference type="EMBL" id="CP002685">
    <property type="protein sequence ID" value="AEC07468.1"/>
    <property type="molecule type" value="Genomic_DNA"/>
</dbReference>
<dbReference type="EMBL" id="BT010429">
    <property type="protein sequence ID" value="AAQ62430.1"/>
    <property type="molecule type" value="mRNA"/>
</dbReference>
<dbReference type="EMBL" id="AK175772">
    <property type="protein sequence ID" value="BAD43535.1"/>
    <property type="molecule type" value="mRNA"/>
</dbReference>
<dbReference type="PIR" id="T01147">
    <property type="entry name" value="T01147"/>
</dbReference>
<dbReference type="RefSeq" id="NP_179939.1">
    <molecule id="O80474-1"/>
    <property type="nucleotide sequence ID" value="NM_127922.3"/>
</dbReference>
<dbReference type="SMR" id="O80474"/>
<dbReference type="BioGRID" id="2242">
    <property type="interactions" value="1"/>
</dbReference>
<dbReference type="FunCoup" id="O80474">
    <property type="interactions" value="28"/>
</dbReference>
<dbReference type="IntAct" id="O80474">
    <property type="interactions" value="1"/>
</dbReference>
<dbReference type="STRING" id="3702.O80474"/>
<dbReference type="ESTHER" id="arath-MES4">
    <property type="family name" value="Hydroxynitrile_lyase"/>
</dbReference>
<dbReference type="PaxDb" id="3702-AT2G23580.1"/>
<dbReference type="ProteomicsDB" id="232250">
    <molecule id="O80474-1"/>
</dbReference>
<dbReference type="EnsemblPlants" id="AT2G23580.1">
    <molecule id="O80474-1"/>
    <property type="protein sequence ID" value="AT2G23580.1"/>
    <property type="gene ID" value="AT2G23580"/>
</dbReference>
<dbReference type="GeneID" id="816890"/>
<dbReference type="Gramene" id="AT2G23580.1">
    <molecule id="O80474-1"/>
    <property type="protein sequence ID" value="AT2G23580.1"/>
    <property type="gene ID" value="AT2G23580"/>
</dbReference>
<dbReference type="KEGG" id="ath:AT2G23580"/>
<dbReference type="Araport" id="AT2G23580"/>
<dbReference type="TAIR" id="AT2G23580">
    <property type="gene designation" value="MES4"/>
</dbReference>
<dbReference type="eggNOG" id="ENOG502QR2J">
    <property type="taxonomic scope" value="Eukaryota"/>
</dbReference>
<dbReference type="HOGENOM" id="CLU_046066_0_1_1"/>
<dbReference type="InParanoid" id="O80474"/>
<dbReference type="OMA" id="CADHMAM"/>
<dbReference type="OrthoDB" id="408373at2759"/>
<dbReference type="PhylomeDB" id="O80474"/>
<dbReference type="BioCyc" id="ARA:AT2G23580-MONOMER"/>
<dbReference type="PRO" id="PR:O80474"/>
<dbReference type="Proteomes" id="UP000006548">
    <property type="component" value="Chromosome 2"/>
</dbReference>
<dbReference type="ExpressionAtlas" id="O80474">
    <property type="expression patterns" value="baseline and differential"/>
</dbReference>
<dbReference type="GO" id="GO:0005773">
    <property type="term" value="C:vacuole"/>
    <property type="evidence" value="ECO:0007005"/>
    <property type="project" value="TAIR"/>
</dbReference>
<dbReference type="GO" id="GO:0016788">
    <property type="term" value="F:hydrolase activity, acting on ester bonds"/>
    <property type="evidence" value="ECO:0000314"/>
    <property type="project" value="TAIR"/>
</dbReference>
<dbReference type="GO" id="GO:0080031">
    <property type="term" value="F:methyl salicylate esterase activity"/>
    <property type="evidence" value="ECO:0000314"/>
    <property type="project" value="TAIR"/>
</dbReference>
<dbReference type="GO" id="GO:0009696">
    <property type="term" value="P:salicylic acid metabolic process"/>
    <property type="evidence" value="ECO:0000314"/>
    <property type="project" value="TAIR"/>
</dbReference>
<dbReference type="FunFam" id="3.40.50.1820:FF:000051">
    <property type="entry name" value="(S)-hydroxynitrile lyase"/>
    <property type="match status" value="1"/>
</dbReference>
<dbReference type="Gene3D" id="3.40.50.1820">
    <property type="entry name" value="alpha/beta hydrolase"/>
    <property type="match status" value="1"/>
</dbReference>
<dbReference type="InterPro" id="IPR000073">
    <property type="entry name" value="AB_hydrolase_1"/>
</dbReference>
<dbReference type="InterPro" id="IPR029058">
    <property type="entry name" value="AB_hydrolase_fold"/>
</dbReference>
<dbReference type="InterPro" id="IPR045889">
    <property type="entry name" value="MES/HNL"/>
</dbReference>
<dbReference type="PANTHER" id="PTHR10992:SF1007">
    <property type="entry name" value="METHYLESTERASE 3-RELATED"/>
    <property type="match status" value="1"/>
</dbReference>
<dbReference type="PANTHER" id="PTHR10992">
    <property type="entry name" value="METHYLESTERASE FAMILY MEMBER"/>
    <property type="match status" value="1"/>
</dbReference>
<dbReference type="Pfam" id="PF12697">
    <property type="entry name" value="Abhydrolase_6"/>
    <property type="match status" value="1"/>
</dbReference>
<dbReference type="SUPFAM" id="SSF53474">
    <property type="entry name" value="alpha/beta-Hydrolases"/>
    <property type="match status" value="1"/>
</dbReference>
<comment type="function">
    <text evidence="2 3">Methylesterase shown to have carboxylesterase activity and methyl salicylate (MeSA) esterase activity in vitro.</text>
</comment>
<comment type="catalytic activity">
    <reaction evidence="2">
        <text>methyl salicylate + H2O = salicylate + methanol + H(+)</text>
        <dbReference type="Rhea" id="RHEA:33611"/>
        <dbReference type="ChEBI" id="CHEBI:15377"/>
        <dbReference type="ChEBI" id="CHEBI:15378"/>
        <dbReference type="ChEBI" id="CHEBI:17790"/>
        <dbReference type="ChEBI" id="CHEBI:30762"/>
        <dbReference type="ChEBI" id="CHEBI:31832"/>
    </reaction>
    <physiologicalReaction direction="left-to-right" evidence="2">
        <dbReference type="Rhea" id="RHEA:33612"/>
    </physiologicalReaction>
</comment>
<comment type="activity regulation">
    <text evidence="3">Esterase activity is down-regulated by salicylic acid (SA).</text>
</comment>
<comment type="biophysicochemical properties">
    <kinetics>
        <Vmax evidence="3">16.07 nmol/min/ug enzyme with methyl salicylate (MeSA) as substrate</Vmax>
    </kinetics>
</comment>
<comment type="pathway">
    <text evidence="2">Plant hormone biosynthesis.</text>
</comment>
<comment type="alternative products">
    <event type="alternative splicing"/>
    <isoform>
        <id>O80474-1</id>
        <name>1</name>
        <sequence type="displayed"/>
    </isoform>
    <text>A number of isoforms are produced. According to EST sequences.</text>
</comment>
<comment type="similarity">
    <text evidence="5">Belongs to the AB hydrolase superfamily. Methylesterase family.</text>
</comment>
<feature type="chain" id="PRO_0000418179" description="Methylesterase 4">
    <location>
        <begin position="1"/>
        <end position="263"/>
    </location>
</feature>
<feature type="active site" description="Acyl-ester intermediate" evidence="1">
    <location>
        <position position="84"/>
    </location>
</feature>
<feature type="active site" description="Charge relay system" evidence="1">
    <location>
        <position position="213"/>
    </location>
</feature>
<feature type="active site" description="Charge relay system" evidence="1">
    <location>
        <position position="241"/>
    </location>
</feature>
<evidence type="ECO:0000250" key="1">
    <source>
        <dbReference type="UniProtKB" id="Q6RYA0"/>
    </source>
</evidence>
<evidence type="ECO:0000269" key="2">
    <source>
    </source>
</evidence>
<evidence type="ECO:0000269" key="3">
    <source>
    </source>
</evidence>
<evidence type="ECO:0000303" key="4">
    <source>
    </source>
</evidence>
<evidence type="ECO:0000305" key="5"/>
<evidence type="ECO:0000312" key="6">
    <source>
        <dbReference type="Araport" id="AT2G23580"/>
    </source>
</evidence>
<evidence type="ECO:0000312" key="7">
    <source>
        <dbReference type="EMBL" id="AAC23771.1"/>
    </source>
</evidence>
<accession>O80474</accession>
<gene>
    <name evidence="4" type="primary">MES4</name>
    <name type="synonym">ABE4</name>
    <name evidence="6" type="ordered locus">At2g23580</name>
    <name evidence="7" type="ORF">F26B6.23</name>
</gene>
<organism>
    <name type="scientific">Arabidopsis thaliana</name>
    <name type="common">Mouse-ear cress</name>
    <dbReference type="NCBI Taxonomy" id="3702"/>
    <lineage>
        <taxon>Eukaryota</taxon>
        <taxon>Viridiplantae</taxon>
        <taxon>Streptophyta</taxon>
        <taxon>Embryophyta</taxon>
        <taxon>Tracheophyta</taxon>
        <taxon>Spermatophyta</taxon>
        <taxon>Magnoliopsida</taxon>
        <taxon>eudicotyledons</taxon>
        <taxon>Gunneridae</taxon>
        <taxon>Pentapetalae</taxon>
        <taxon>rosids</taxon>
        <taxon>malvids</taxon>
        <taxon>Brassicales</taxon>
        <taxon>Brassicaceae</taxon>
        <taxon>Camelineae</taxon>
        <taxon>Arabidopsis</taxon>
    </lineage>
</organism>
<name>MES4_ARATH</name>
<protein>
    <recommendedName>
        <fullName evidence="4">Methylesterase 4</fullName>
        <shortName evidence="4">AtMES4</shortName>
        <ecNumber evidence="2">3.1.1.-</ecNumber>
    </recommendedName>
    <alternativeName>
        <fullName>Alpha/beta fold hydrolase/esterase 4</fullName>
    </alternativeName>
</protein>
<reference key="1">
    <citation type="journal article" date="1999" name="Nature">
        <title>Sequence and analysis of chromosome 2 of the plant Arabidopsis thaliana.</title>
        <authorList>
            <person name="Lin X."/>
            <person name="Kaul S."/>
            <person name="Rounsley S.D."/>
            <person name="Shea T.P."/>
            <person name="Benito M.-I."/>
            <person name="Town C.D."/>
            <person name="Fujii C.Y."/>
            <person name="Mason T.M."/>
            <person name="Bowman C.L."/>
            <person name="Barnstead M.E."/>
            <person name="Feldblyum T.V."/>
            <person name="Buell C.R."/>
            <person name="Ketchum K.A."/>
            <person name="Lee J.J."/>
            <person name="Ronning C.M."/>
            <person name="Koo H.L."/>
            <person name="Moffat K.S."/>
            <person name="Cronin L.A."/>
            <person name="Shen M."/>
            <person name="Pai G."/>
            <person name="Van Aken S."/>
            <person name="Umayam L."/>
            <person name="Tallon L.J."/>
            <person name="Gill J.E."/>
            <person name="Adams M.D."/>
            <person name="Carrera A.J."/>
            <person name="Creasy T.H."/>
            <person name="Goodman H.M."/>
            <person name="Somerville C.R."/>
            <person name="Copenhaver G.P."/>
            <person name="Preuss D."/>
            <person name="Nierman W.C."/>
            <person name="White O."/>
            <person name="Eisen J.A."/>
            <person name="Salzberg S.L."/>
            <person name="Fraser C.M."/>
            <person name="Venter J.C."/>
        </authorList>
    </citation>
    <scope>NUCLEOTIDE SEQUENCE [LARGE SCALE GENOMIC DNA]</scope>
    <source>
        <strain>cv. Columbia</strain>
    </source>
</reference>
<reference key="2">
    <citation type="journal article" date="2017" name="Plant J.">
        <title>Araport11: a complete reannotation of the Arabidopsis thaliana reference genome.</title>
        <authorList>
            <person name="Cheng C.Y."/>
            <person name="Krishnakumar V."/>
            <person name="Chan A.P."/>
            <person name="Thibaud-Nissen F."/>
            <person name="Schobel S."/>
            <person name="Town C.D."/>
        </authorList>
    </citation>
    <scope>GENOME REANNOTATION</scope>
    <source>
        <strain>cv. Columbia</strain>
    </source>
</reference>
<reference key="3">
    <citation type="journal article" date="2003" name="Science">
        <title>Empirical analysis of transcriptional activity in the Arabidopsis genome.</title>
        <authorList>
            <person name="Yamada K."/>
            <person name="Lim J."/>
            <person name="Dale J.M."/>
            <person name="Chen H."/>
            <person name="Shinn P."/>
            <person name="Palm C.J."/>
            <person name="Southwick A.M."/>
            <person name="Wu H.C."/>
            <person name="Kim C.J."/>
            <person name="Nguyen M."/>
            <person name="Pham P.K."/>
            <person name="Cheuk R.F."/>
            <person name="Karlin-Newmann G."/>
            <person name="Liu S.X."/>
            <person name="Lam B."/>
            <person name="Sakano H."/>
            <person name="Wu T."/>
            <person name="Yu G."/>
            <person name="Miranda M."/>
            <person name="Quach H.L."/>
            <person name="Tripp M."/>
            <person name="Chang C.H."/>
            <person name="Lee J.M."/>
            <person name="Toriumi M.J."/>
            <person name="Chan M.M."/>
            <person name="Tang C.C."/>
            <person name="Onodera C.S."/>
            <person name="Deng J.M."/>
            <person name="Akiyama K."/>
            <person name="Ansari Y."/>
            <person name="Arakawa T."/>
            <person name="Banh J."/>
            <person name="Banno F."/>
            <person name="Bowser L."/>
            <person name="Brooks S.Y."/>
            <person name="Carninci P."/>
            <person name="Chao Q."/>
            <person name="Choy N."/>
            <person name="Enju A."/>
            <person name="Goldsmith A.D."/>
            <person name="Gurjal M."/>
            <person name="Hansen N.F."/>
            <person name="Hayashizaki Y."/>
            <person name="Johnson-Hopson C."/>
            <person name="Hsuan V.W."/>
            <person name="Iida K."/>
            <person name="Karnes M."/>
            <person name="Khan S."/>
            <person name="Koesema E."/>
            <person name="Ishida J."/>
            <person name="Jiang P.X."/>
            <person name="Jones T."/>
            <person name="Kawai J."/>
            <person name="Kamiya A."/>
            <person name="Meyers C."/>
            <person name="Nakajima M."/>
            <person name="Narusaka M."/>
            <person name="Seki M."/>
            <person name="Sakurai T."/>
            <person name="Satou M."/>
            <person name="Tamse R."/>
            <person name="Vaysberg M."/>
            <person name="Wallender E.K."/>
            <person name="Wong C."/>
            <person name="Yamamura Y."/>
            <person name="Yuan S."/>
            <person name="Shinozaki K."/>
            <person name="Davis R.W."/>
            <person name="Theologis A."/>
            <person name="Ecker J.R."/>
        </authorList>
    </citation>
    <scope>NUCLEOTIDE SEQUENCE [LARGE SCALE MRNA]</scope>
    <source>
        <strain>cv. Columbia</strain>
    </source>
</reference>
<reference key="4">
    <citation type="submission" date="2004-09" db="EMBL/GenBank/DDBJ databases">
        <title>Large-scale analysis of RIKEN Arabidopsis full-length (RAFL) cDNAs.</title>
        <authorList>
            <person name="Totoki Y."/>
            <person name="Seki M."/>
            <person name="Ishida J."/>
            <person name="Nakajima M."/>
            <person name="Enju A."/>
            <person name="Kamiya A."/>
            <person name="Narusaka M."/>
            <person name="Shin-i T."/>
            <person name="Nakagawa M."/>
            <person name="Sakamoto N."/>
            <person name="Oishi K."/>
            <person name="Kohara Y."/>
            <person name="Kobayashi M."/>
            <person name="Toyoda A."/>
            <person name="Sakaki Y."/>
            <person name="Sakurai T."/>
            <person name="Iida K."/>
            <person name="Akiyama K."/>
            <person name="Satou M."/>
            <person name="Toyoda T."/>
            <person name="Konagaya A."/>
            <person name="Carninci P."/>
            <person name="Kawai J."/>
            <person name="Hayashizaki Y."/>
            <person name="Shinozaki K."/>
        </authorList>
    </citation>
    <scope>NUCLEOTIDE SEQUENCE [LARGE SCALE MRNA]</scope>
    <source>
        <strain>cv. Columbia</strain>
    </source>
</reference>
<reference key="5">
    <citation type="journal article" date="2008" name="Plant J.">
        <title>Identification of likely orthologs of tobacco salicylic acid-binding protein 2 and their role in systemic acquired resistance in Arabidopsis thaliana.</title>
        <authorList>
            <person name="Vlot A.C."/>
            <person name="Liu P.P."/>
            <person name="Cameron R.K."/>
            <person name="Park S.W."/>
            <person name="Yang Y."/>
            <person name="Kumar D."/>
            <person name="Zhou F."/>
            <person name="Padukkavidana T."/>
            <person name="Gustafsson C."/>
            <person name="Pichersky E."/>
            <person name="Klessig D.F."/>
        </authorList>
    </citation>
    <scope>FUNCTION</scope>
    <scope>ACTIVITY REGULATION</scope>
    <scope>BIOPHYSICOCHEMICAL PROPERTIES</scope>
</reference>
<reference key="6">
    <citation type="journal article" date="2008" name="Plant Physiol.">
        <title>Inactive methyl indole-3-acetic acid ester can be hydrolyzed and activated by several esterases belonging to the AtMES esterase family of Arabidopsis.</title>
        <authorList>
            <person name="Yang Y."/>
            <person name="Xu R."/>
            <person name="Ma C.J."/>
            <person name="Vlot A.C."/>
            <person name="Klessig D.F."/>
            <person name="Pichersky E."/>
        </authorList>
    </citation>
    <scope>GENE FAMILY</scope>
    <scope>FUNCTION</scope>
    <scope>CATALYTIC ACTIVITY</scope>
    <scope>PATHWAY</scope>
</reference>
<sequence length="263" mass="29582">MEKNNKKRFVLVHGLCHGAWCWYKVKTHLEAVGHCVTAVDLAASGINMTRLEEIQTLKDYCKPLLELLNSLGSDDDKVILVAHSMGGIPAALASDIFPSKIATIVFLTAFMPDTRNLPAYVYQKLIRSVPQEGWLDTVFGTYGKHECPLEFALFGPKFMAKNLYQLSPVQDLELAKMLVRVNPIITNNLAGTRSFSEEGYGTVTRIYIVCGEDMAVPEDYQWWMIKNFPPKEVMEIKCADHMAMFSKPHKLCALLVEIACKYA</sequence>